<proteinExistence type="evidence at protein level"/>
<accession>Q8VHK7</accession>
<accession>Q923W3</accession>
<organism>
    <name type="scientific">Rattus norvegicus</name>
    <name type="common">Rat</name>
    <dbReference type="NCBI Taxonomy" id="10116"/>
    <lineage>
        <taxon>Eukaryota</taxon>
        <taxon>Metazoa</taxon>
        <taxon>Chordata</taxon>
        <taxon>Craniata</taxon>
        <taxon>Vertebrata</taxon>
        <taxon>Euteleostomi</taxon>
        <taxon>Mammalia</taxon>
        <taxon>Eutheria</taxon>
        <taxon>Euarchontoglires</taxon>
        <taxon>Glires</taxon>
        <taxon>Rodentia</taxon>
        <taxon>Myomorpha</taxon>
        <taxon>Muroidea</taxon>
        <taxon>Muridae</taxon>
        <taxon>Murinae</taxon>
        <taxon>Rattus</taxon>
    </lineage>
</organism>
<feature type="chain" id="PRO_0000191702" description="Hepatoma-derived growth factor">
    <location>
        <begin position="1"/>
        <end position="237"/>
    </location>
</feature>
<feature type="domain" description="PWWP" evidence="4">
    <location>
        <begin position="12"/>
        <end position="69"/>
    </location>
</feature>
<feature type="region of interest" description="Disordered" evidence="5">
    <location>
        <begin position="69"/>
        <end position="237"/>
    </location>
</feature>
<feature type="short sequence motif" description="Nuclear localization signal" evidence="1">
    <location>
        <begin position="75"/>
        <end position="80"/>
    </location>
</feature>
<feature type="short sequence motif" description="Bipartite nuclear localization signal" evidence="1">
    <location>
        <begin position="155"/>
        <end position="170"/>
    </location>
</feature>
<feature type="compositionally biased region" description="Polar residues" evidence="5">
    <location>
        <begin position="91"/>
        <end position="106"/>
    </location>
</feature>
<feature type="compositionally biased region" description="Basic and acidic residues" evidence="5">
    <location>
        <begin position="116"/>
        <end position="128"/>
    </location>
</feature>
<feature type="compositionally biased region" description="Basic and acidic residues" evidence="5">
    <location>
        <begin position="135"/>
        <end position="173"/>
    </location>
</feature>
<feature type="compositionally biased region" description="Basic and acidic residues" evidence="5">
    <location>
        <begin position="181"/>
        <end position="197"/>
    </location>
</feature>
<feature type="compositionally biased region" description="Acidic residues" evidence="5">
    <location>
        <begin position="212"/>
        <end position="222"/>
    </location>
</feature>
<feature type="compositionally biased region" description="Basic and acidic residues" evidence="5">
    <location>
        <begin position="223"/>
        <end position="237"/>
    </location>
</feature>
<feature type="binding site" evidence="1">
    <location>
        <position position="19"/>
    </location>
    <ligand>
        <name>heparin</name>
        <dbReference type="ChEBI" id="CHEBI:28304"/>
    </ligand>
</feature>
<feature type="binding site" evidence="1">
    <location>
        <position position="21"/>
    </location>
    <ligand>
        <name>heparin</name>
        <dbReference type="ChEBI" id="CHEBI:28304"/>
    </ligand>
</feature>
<feature type="binding site" evidence="1">
    <location>
        <position position="72"/>
    </location>
    <ligand>
        <name>heparin</name>
        <dbReference type="ChEBI" id="CHEBI:28304"/>
    </ligand>
</feature>
<feature type="binding site" evidence="1">
    <location>
        <position position="75"/>
    </location>
    <ligand>
        <name>heparin</name>
        <dbReference type="ChEBI" id="CHEBI:28304"/>
    </ligand>
</feature>
<feature type="binding site" evidence="1">
    <location>
        <position position="79"/>
    </location>
    <ligand>
        <name>heparin</name>
        <dbReference type="ChEBI" id="CHEBI:28304"/>
    </ligand>
</feature>
<feature type="binding site" evidence="1">
    <location>
        <position position="80"/>
    </location>
    <ligand>
        <name>heparin</name>
        <dbReference type="ChEBI" id="CHEBI:28304"/>
    </ligand>
</feature>
<feature type="modified residue" description="N6-acetyllysine" evidence="2">
    <location>
        <position position="44"/>
    </location>
</feature>
<feature type="modified residue" description="Phosphoserine" evidence="7 9">
    <location>
        <position position="132"/>
    </location>
</feature>
<feature type="modified residue" description="Phosphoserine" evidence="7 9">
    <location>
        <position position="133"/>
    </location>
</feature>
<feature type="modified residue" description="Phosphoserine" evidence="8 9">
    <location>
        <position position="165"/>
    </location>
</feature>
<feature type="modified residue" description="Phosphoserine" evidence="9">
    <location>
        <position position="199"/>
    </location>
</feature>
<feature type="modified residue" description="Phosphothreonine" evidence="9">
    <location>
        <position position="200"/>
    </location>
</feature>
<feature type="modified residue" description="Phosphoserine" evidence="9">
    <location>
        <position position="202"/>
    </location>
</feature>
<feature type="modified residue" description="Phosphoserine" evidence="9">
    <location>
        <position position="206"/>
    </location>
</feature>
<feature type="modified residue" description="Phosphoserine" evidence="2">
    <location>
        <position position="236"/>
    </location>
</feature>
<feature type="disulfide bond" evidence="3">
    <location>
        <begin position="12"/>
        <end position="108"/>
    </location>
</feature>
<feature type="cross-link" description="Glycyl lysine isopeptide (Lys-Gly) (interchain with G-Cter in SUMO); alternate" evidence="1">
    <location>
        <position position="80"/>
    </location>
</feature>
<feature type="cross-link" description="Glycyl lysine isopeptide (Lys-Gly) (interchain with G-Cter in SUMO2); alternate" evidence="2">
    <location>
        <position position="80"/>
    </location>
</feature>
<feature type="sequence conflict" description="In Ref. 1; AAL47132." evidence="6" ref="1">
    <original>V</original>
    <variation>I</variation>
    <location>
        <position position="231"/>
    </location>
</feature>
<feature type="strand" evidence="11">
    <location>
        <begin position="15"/>
        <end position="18"/>
    </location>
</feature>
<feature type="strand" evidence="11">
    <location>
        <begin position="26"/>
        <end position="31"/>
    </location>
</feature>
<feature type="helix" evidence="11">
    <location>
        <begin position="35"/>
        <end position="39"/>
    </location>
</feature>
<feature type="turn" evidence="11">
    <location>
        <begin position="40"/>
        <end position="43"/>
    </location>
</feature>
<feature type="strand" evidence="11">
    <location>
        <begin position="45"/>
        <end position="49"/>
    </location>
</feature>
<feature type="turn" evidence="11">
    <location>
        <begin position="50"/>
        <end position="52"/>
    </location>
</feature>
<feature type="strand" evidence="11">
    <location>
        <begin position="55"/>
        <end position="58"/>
    </location>
</feature>
<feature type="helix" evidence="11">
    <location>
        <begin position="60"/>
        <end position="62"/>
    </location>
</feature>
<feature type="strand" evidence="11">
    <location>
        <begin position="63"/>
        <end position="67"/>
    </location>
</feature>
<feature type="helix" evidence="11">
    <location>
        <begin position="70"/>
        <end position="73"/>
    </location>
</feature>
<feature type="strand" evidence="10">
    <location>
        <begin position="78"/>
        <end position="81"/>
    </location>
</feature>
<feature type="helix" evidence="11">
    <location>
        <begin position="82"/>
        <end position="91"/>
    </location>
</feature>
<evidence type="ECO:0000250" key="1"/>
<evidence type="ECO:0000250" key="2">
    <source>
        <dbReference type="UniProtKB" id="P51858"/>
    </source>
</evidence>
<evidence type="ECO:0000250" key="3">
    <source>
        <dbReference type="UniProtKB" id="P51859"/>
    </source>
</evidence>
<evidence type="ECO:0000255" key="4">
    <source>
        <dbReference type="PROSITE-ProRule" id="PRU00162"/>
    </source>
</evidence>
<evidence type="ECO:0000256" key="5">
    <source>
        <dbReference type="SAM" id="MobiDB-lite"/>
    </source>
</evidence>
<evidence type="ECO:0000305" key="6"/>
<evidence type="ECO:0007744" key="7">
    <source>
    </source>
</evidence>
<evidence type="ECO:0007744" key="8">
    <source>
    </source>
</evidence>
<evidence type="ECO:0007744" key="9">
    <source>
    </source>
</evidence>
<evidence type="ECO:0007829" key="10">
    <source>
        <dbReference type="PDB" id="2B8A"/>
    </source>
</evidence>
<evidence type="ECO:0007829" key="11">
    <source>
        <dbReference type="PDB" id="5XSK"/>
    </source>
</evidence>
<protein>
    <recommendedName>
        <fullName>Hepatoma-derived growth factor</fullName>
        <shortName>HDGF</shortName>
    </recommendedName>
</protein>
<gene>
    <name type="primary">Hdgf</name>
</gene>
<comment type="function">
    <text evidence="2">Acts as a transcriptional repressor (By similarity). Has mitogenic activity for fibroblasts (By similarity). Heparin-binding protein (By similarity).</text>
</comment>
<comment type="subunit">
    <text evidence="2">Monomer, and domain-swapped homodimer (By similarity). Interacts with nuclear proteins NCL and YBX1/YB1 (By similarity).</text>
</comment>
<comment type="subcellular location">
    <subcellularLocation>
        <location evidence="2">Nucleus</location>
    </subcellularLocation>
    <subcellularLocation>
        <location evidence="2">Cytoplasm</location>
    </subcellularLocation>
    <subcellularLocation>
        <location evidence="2">Secreted</location>
        <location evidence="2">Extracellular exosome</location>
    </subcellularLocation>
    <text evidence="2">Secreted by exosomes and is located inside the exosome (By similarity). May also be secreted as free protein via an as yet unknown pathway (By similarity).</text>
</comment>
<comment type="domain">
    <text evidence="2">The PWWP domain harbors the heparin-binding sites and is responsible for DNA-binding, while the C-terminal region is essentially unstructured.</text>
</comment>
<comment type="domain">
    <text evidence="2 3">The N-terminal region does not contain a typical signal sequence but is required for secretion (By similarity). It also determines exosomal location (By similarity).</text>
</comment>
<comment type="PTM">
    <text evidence="2">Sumoylated with SUMO1. Sumoylation prevents binding to chromatin.</text>
</comment>
<comment type="PTM">
    <text evidence="3">Phosphorylation at Ser-165 is likely to be required for secretion.</text>
</comment>
<comment type="similarity">
    <text evidence="6">Belongs to the HDGF family.</text>
</comment>
<reference key="1">
    <citation type="submission" date="2001-11" db="EMBL/GenBank/DDBJ databases">
        <title>Isolation of rat HDGF from hepatic stellate cells.</title>
        <authorList>
            <person name="Matsui H."/>
            <person name="Kawada N."/>
            <person name="Yokoya F."/>
            <person name="Takahara Y."/>
        </authorList>
    </citation>
    <scope>NUCLEOTIDE SEQUENCE [MRNA]</scope>
    <source>
        <strain>Wistar</strain>
        <tissue>Hepatic stellate cell</tissue>
    </source>
</reference>
<reference key="2">
    <citation type="submission" date="2001-06" db="EMBL/GenBank/DDBJ databases">
        <authorList>
            <person name="Yu L."/>
        </authorList>
    </citation>
    <scope>NUCLEOTIDE SEQUENCE [MRNA]</scope>
</reference>
<reference key="3">
    <citation type="journal article" date="2004" name="Genome Res.">
        <title>The status, quality, and expansion of the NIH full-length cDNA project: the Mammalian Gene Collection (MGC).</title>
        <authorList>
            <consortium name="The MGC Project Team"/>
        </authorList>
    </citation>
    <scope>NUCLEOTIDE SEQUENCE [LARGE SCALE MRNA]</scope>
    <source>
        <tissue>Heart</tissue>
    </source>
</reference>
<reference key="4">
    <citation type="submission" date="2007-04" db="UniProtKB">
        <authorList>
            <person name="Lubec G."/>
            <person name="Diao W."/>
        </authorList>
    </citation>
    <scope>PROTEIN SEQUENCE OF 45-61 AND 139-146</scope>
    <scope>IDENTIFICATION BY MASS SPECTROMETRY</scope>
    <source>
        <strain>Sprague-Dawley</strain>
        <tissue>Hippocampus</tissue>
    </source>
</reference>
<reference key="5">
    <citation type="journal article" date="2006" name="J. Proteome Res.">
        <title>Phosphoproteomic analysis of rat liver by high capacity IMAC and LC-MS/MS.</title>
        <authorList>
            <person name="Moser K."/>
            <person name="White F.M."/>
        </authorList>
    </citation>
    <scope>PHOSPHORYLATION [LARGE SCALE ANALYSIS] AT SER-132 AND SER-133</scope>
    <scope>IDENTIFICATION BY MASS SPECTROMETRY [LARGE SCALE ANALYSIS]</scope>
</reference>
<reference key="6">
    <citation type="journal article" date="2006" name="Proc. Natl. Acad. Sci. U.S.A.">
        <title>Quantitative phosphoproteomics of vasopressin-sensitive renal cells: regulation of aquaporin-2 phosphorylation at two sites.</title>
        <authorList>
            <person name="Hoffert J.D."/>
            <person name="Pisitkun T."/>
            <person name="Wang G."/>
            <person name="Shen R.-F."/>
            <person name="Knepper M.A."/>
        </authorList>
    </citation>
    <scope>PHOSPHORYLATION [LARGE SCALE ANALYSIS] AT SER-165</scope>
    <scope>IDENTIFICATION BY MASS SPECTROMETRY [LARGE SCALE ANALYSIS]</scope>
</reference>
<reference key="7">
    <citation type="journal article" date="2012" name="Nat. Commun.">
        <title>Quantitative maps of protein phosphorylation sites across 14 different rat organs and tissues.</title>
        <authorList>
            <person name="Lundby A."/>
            <person name="Secher A."/>
            <person name="Lage K."/>
            <person name="Nordsborg N.B."/>
            <person name="Dmytriyev A."/>
            <person name="Lundby C."/>
            <person name="Olsen J.V."/>
        </authorList>
    </citation>
    <scope>PHOSPHORYLATION [LARGE SCALE ANALYSIS] AT SER-132; SER-133; SER-165; SER-199; THR-200; SER-202 AND SER-206</scope>
    <scope>IDENTIFICATION BY MASS SPECTROMETRY [LARGE SCALE ANALYSIS]</scope>
</reference>
<reference key="8">
    <citation type="journal article" date="2006" name="Protein Sci.">
        <title>High resolution structure of the HDGF PWWP domain: a potential DNA binding domain.</title>
        <authorList>
            <person name="Lukasik S.M."/>
            <person name="Cierpicki T."/>
            <person name="Borloz M."/>
            <person name="Grembecka J."/>
            <person name="Everett A."/>
            <person name="Bushweller J.H."/>
        </authorList>
    </citation>
    <scope>STRUCTURE BY NMR OF 1-110</scope>
</reference>
<keyword id="KW-0002">3D-structure</keyword>
<keyword id="KW-0007">Acetylation</keyword>
<keyword id="KW-0963">Cytoplasm</keyword>
<keyword id="KW-0903">Direct protein sequencing</keyword>
<keyword id="KW-1015">Disulfide bond</keyword>
<keyword id="KW-0238">DNA-binding</keyword>
<keyword id="KW-0339">Growth factor</keyword>
<keyword id="KW-0358">Heparin-binding</keyword>
<keyword id="KW-1017">Isopeptide bond</keyword>
<keyword id="KW-0547">Nucleotide-binding</keyword>
<keyword id="KW-0539">Nucleus</keyword>
<keyword id="KW-0597">Phosphoprotein</keyword>
<keyword id="KW-1185">Reference proteome</keyword>
<keyword id="KW-0678">Repressor</keyword>
<keyword id="KW-0964">Secreted</keyword>
<keyword id="KW-0804">Transcription</keyword>
<keyword id="KW-0805">Transcription regulation</keyword>
<keyword id="KW-0832">Ubl conjugation</keyword>
<dbReference type="EMBL" id="AF448810">
    <property type="protein sequence ID" value="AAL47132.1"/>
    <property type="molecule type" value="mRNA"/>
</dbReference>
<dbReference type="EMBL" id="AF389348">
    <property type="protein sequence ID" value="AAK72966.1"/>
    <property type="molecule type" value="mRNA"/>
</dbReference>
<dbReference type="EMBL" id="BC070943">
    <property type="protein sequence ID" value="AAH70943.1"/>
    <property type="molecule type" value="mRNA"/>
</dbReference>
<dbReference type="RefSeq" id="NP_446159.1">
    <property type="nucleotide sequence ID" value="NM_053707.3"/>
</dbReference>
<dbReference type="PDB" id="2B8A">
    <property type="method" value="NMR"/>
    <property type="chains" value="A=1-110"/>
</dbReference>
<dbReference type="PDB" id="5XSK">
    <property type="method" value="X-ray"/>
    <property type="resolution" value="2.84 A"/>
    <property type="chains" value="A/B=1-100"/>
</dbReference>
<dbReference type="PDB" id="5XSL">
    <property type="method" value="X-ray"/>
    <property type="resolution" value="3.30 A"/>
    <property type="chains" value="A=1-100"/>
</dbReference>
<dbReference type="PDBsum" id="2B8A"/>
<dbReference type="PDBsum" id="5XSK"/>
<dbReference type="PDBsum" id="5XSL"/>
<dbReference type="BMRB" id="Q8VHK7"/>
<dbReference type="SMR" id="Q8VHK7"/>
<dbReference type="FunCoup" id="Q8VHK7">
    <property type="interactions" value="2334"/>
</dbReference>
<dbReference type="STRING" id="10116.ENSRNOP00000017234"/>
<dbReference type="iPTMnet" id="Q8VHK7"/>
<dbReference type="PhosphoSitePlus" id="Q8VHK7"/>
<dbReference type="jPOST" id="Q8VHK7"/>
<dbReference type="PaxDb" id="10116-ENSRNOP00000017234"/>
<dbReference type="Ensembl" id="ENSRNOT00000103162.1">
    <property type="protein sequence ID" value="ENSRNOP00000088839.1"/>
    <property type="gene ID" value="ENSRNOG00000042261.4"/>
</dbReference>
<dbReference type="GeneID" id="114499"/>
<dbReference type="KEGG" id="rno:114499"/>
<dbReference type="UCSC" id="RGD:70961">
    <property type="organism name" value="rat"/>
</dbReference>
<dbReference type="AGR" id="RGD:70961"/>
<dbReference type="CTD" id="3068"/>
<dbReference type="RGD" id="70961">
    <property type="gene designation" value="Hdgf"/>
</dbReference>
<dbReference type="eggNOG" id="KOG1904">
    <property type="taxonomic scope" value="Eukaryota"/>
</dbReference>
<dbReference type="GeneTree" id="ENSGT00940000157485"/>
<dbReference type="InParanoid" id="Q8VHK7"/>
<dbReference type="OMA" id="KWTRGEF"/>
<dbReference type="OrthoDB" id="62853at2759"/>
<dbReference type="PhylomeDB" id="Q8VHK7"/>
<dbReference type="EvolutionaryTrace" id="Q8VHK7"/>
<dbReference type="PRO" id="PR:Q8VHK7"/>
<dbReference type="Proteomes" id="UP000002494">
    <property type="component" value="Chromosome 2"/>
</dbReference>
<dbReference type="GO" id="GO:0005737">
    <property type="term" value="C:cytoplasm"/>
    <property type="evidence" value="ECO:0000266"/>
    <property type="project" value="RGD"/>
</dbReference>
<dbReference type="GO" id="GO:0005615">
    <property type="term" value="C:extracellular space"/>
    <property type="evidence" value="ECO:0000250"/>
    <property type="project" value="UniProtKB"/>
</dbReference>
<dbReference type="GO" id="GO:0005654">
    <property type="term" value="C:nucleoplasm"/>
    <property type="evidence" value="ECO:0007669"/>
    <property type="project" value="Ensembl"/>
</dbReference>
<dbReference type="GO" id="GO:0005634">
    <property type="term" value="C:nucleus"/>
    <property type="evidence" value="ECO:0000314"/>
    <property type="project" value="BHF-UCL"/>
</dbReference>
<dbReference type="GO" id="GO:0017053">
    <property type="term" value="C:transcription repressor complex"/>
    <property type="evidence" value="ECO:0000266"/>
    <property type="project" value="RGD"/>
</dbReference>
<dbReference type="GO" id="GO:0001227">
    <property type="term" value="F:DNA-binding transcription repressor activity, RNA polymerase II-specific"/>
    <property type="evidence" value="ECO:0000314"/>
    <property type="project" value="NTNU_SB"/>
</dbReference>
<dbReference type="GO" id="GO:0008083">
    <property type="term" value="F:growth factor activity"/>
    <property type="evidence" value="ECO:0007669"/>
    <property type="project" value="UniProtKB-KW"/>
</dbReference>
<dbReference type="GO" id="GO:0008201">
    <property type="term" value="F:heparin binding"/>
    <property type="evidence" value="ECO:0000250"/>
    <property type="project" value="UniProtKB"/>
</dbReference>
<dbReference type="GO" id="GO:0000166">
    <property type="term" value="F:nucleotide binding"/>
    <property type="evidence" value="ECO:0007669"/>
    <property type="project" value="UniProtKB-KW"/>
</dbReference>
<dbReference type="GO" id="GO:0000978">
    <property type="term" value="F:RNA polymerase II cis-regulatory region sequence-specific DNA binding"/>
    <property type="evidence" value="ECO:0000314"/>
    <property type="project" value="NTNU_SB"/>
</dbReference>
<dbReference type="GO" id="GO:0003714">
    <property type="term" value="F:transcription corepressor activity"/>
    <property type="evidence" value="ECO:0000266"/>
    <property type="project" value="RGD"/>
</dbReference>
<dbReference type="GO" id="GO:0001222">
    <property type="term" value="F:transcription corepressor binding"/>
    <property type="evidence" value="ECO:0000266"/>
    <property type="project" value="RGD"/>
</dbReference>
<dbReference type="GO" id="GO:0015631">
    <property type="term" value="F:tubulin binding"/>
    <property type="evidence" value="ECO:0000266"/>
    <property type="project" value="RGD"/>
</dbReference>
<dbReference type="GO" id="GO:0098761">
    <property type="term" value="P:cellular response to interleukin-7"/>
    <property type="evidence" value="ECO:0000266"/>
    <property type="project" value="RGD"/>
</dbReference>
<dbReference type="GO" id="GO:0006338">
    <property type="term" value="P:chromatin remodeling"/>
    <property type="evidence" value="ECO:0000318"/>
    <property type="project" value="GO_Central"/>
</dbReference>
<dbReference type="GO" id="GO:0043524">
    <property type="term" value="P:negative regulation of neuron apoptotic process"/>
    <property type="evidence" value="ECO:0000266"/>
    <property type="project" value="RGD"/>
</dbReference>
<dbReference type="GO" id="GO:0000122">
    <property type="term" value="P:negative regulation of transcription by RNA polymerase II"/>
    <property type="evidence" value="ECO:0000314"/>
    <property type="project" value="BHF-UCL"/>
</dbReference>
<dbReference type="GO" id="GO:0051781">
    <property type="term" value="P:positive regulation of cell division"/>
    <property type="evidence" value="ECO:0000250"/>
    <property type="project" value="UniProtKB"/>
</dbReference>
<dbReference type="GO" id="GO:0045944">
    <property type="term" value="P:positive regulation of transcription by RNA polymerase II"/>
    <property type="evidence" value="ECO:0000314"/>
    <property type="project" value="BHF-UCL"/>
</dbReference>
<dbReference type="GO" id="GO:0034504">
    <property type="term" value="P:protein localization to nucleus"/>
    <property type="evidence" value="ECO:0000314"/>
    <property type="project" value="BHF-UCL"/>
</dbReference>
<dbReference type="CDD" id="cd20148">
    <property type="entry name" value="PWWP_HDGF"/>
    <property type="match status" value="1"/>
</dbReference>
<dbReference type="FunFam" id="2.30.30.140:FF:000017">
    <property type="entry name" value="hepatoma-derived growth factor isoform X1"/>
    <property type="match status" value="1"/>
</dbReference>
<dbReference type="Gene3D" id="2.30.30.140">
    <property type="match status" value="1"/>
</dbReference>
<dbReference type="InterPro" id="IPR000313">
    <property type="entry name" value="PWWP_dom"/>
</dbReference>
<dbReference type="InterPro" id="IPR047363">
    <property type="entry name" value="PWWP_HDGF"/>
</dbReference>
<dbReference type="PANTHER" id="PTHR12550:SF41">
    <property type="entry name" value="HEPATOMA-DERIVED GROWTH FACTOR"/>
    <property type="match status" value="1"/>
</dbReference>
<dbReference type="PANTHER" id="PTHR12550">
    <property type="entry name" value="HEPATOMA-DERIVED GROWTH FACTOR-RELATED"/>
    <property type="match status" value="1"/>
</dbReference>
<dbReference type="Pfam" id="PF00855">
    <property type="entry name" value="PWWP"/>
    <property type="match status" value="1"/>
</dbReference>
<dbReference type="SMART" id="SM00293">
    <property type="entry name" value="PWWP"/>
    <property type="match status" value="1"/>
</dbReference>
<dbReference type="SUPFAM" id="SSF63748">
    <property type="entry name" value="Tudor/PWWP/MBT"/>
    <property type="match status" value="1"/>
</dbReference>
<dbReference type="PROSITE" id="PS50812">
    <property type="entry name" value="PWWP"/>
    <property type="match status" value="1"/>
</dbReference>
<name>HDGF_RAT</name>
<sequence length="237" mass="26488">MSRSNRQKEYKCGDLVFAKMKGYPHWPARIDEMPEAAVKSTANKYQVFFFGTHETAFLGPKDLFPYEESKEKFGKPNKRKGFSEGLWEIENNPTVKASGYQSSQKKSCAEEPEVEPEAHEGDGDKKGNAEGSSDEEGKLVIDEPAKEKNEKGMLKRRAGDMLEDSPKRPKESGDHEEEEKEIAALEGERPLPVEMEKNSTPSEPDSGQGPPPEEEEGEEEAAKEEAEAQGVRDHESL</sequence>